<keyword id="KW-0029">Amino-acid transport</keyword>
<keyword id="KW-0325">Glycoprotein</keyword>
<keyword id="KW-0472">Membrane</keyword>
<keyword id="KW-0597">Phosphoprotein</keyword>
<keyword id="KW-1267">Proteomics identification</keyword>
<keyword id="KW-1185">Reference proteome</keyword>
<keyword id="KW-0812">Transmembrane</keyword>
<keyword id="KW-1133">Transmembrane helix</keyword>
<keyword id="KW-0813">Transport</keyword>
<evidence type="ECO:0000250" key="1">
    <source>
        <dbReference type="UniProtKB" id="Q8BLQ7"/>
    </source>
</evidence>
<evidence type="ECO:0000255" key="2"/>
<evidence type="ECO:0000269" key="3">
    <source>
    </source>
</evidence>
<evidence type="ECO:0000269" key="4">
    <source>
    </source>
</evidence>
<evidence type="ECO:0000305" key="5"/>
<comment type="function">
    <text>Involved in the transport of the cationic amino acids (arginine, lysine and ornithine).</text>
</comment>
<comment type="subcellular location">
    <subcellularLocation>
        <location evidence="5">Membrane</location>
        <topology evidence="5">Multi-pass membrane protein</topology>
    </subcellularLocation>
</comment>
<comment type="similarity">
    <text evidence="5">Belongs to the amino acid-polyamine-organocation (APC) superfamily. Cationic amino acid transporter (CAT) (TC 2.A.3.3) family.</text>
</comment>
<reference key="1">
    <citation type="journal article" date="1998" name="Genomics">
        <title>The gene encoding a cationic amino acid transporter (SLC7A4) maps to the region deleted in the velocardiofacial syndrome.</title>
        <authorList>
            <person name="Sperandeo M.P."/>
            <person name="Borsani G."/>
            <person name="Incerti B."/>
            <person name="Zollo M."/>
            <person name="Rossi E."/>
            <person name="Zuffardi O."/>
            <person name="Castaldo P."/>
            <person name="Taglialatela M."/>
            <person name="Andria G."/>
            <person name="Sebastio G."/>
        </authorList>
    </citation>
    <scope>NUCLEOTIDE SEQUENCE [MRNA]</scope>
    <source>
        <tissue>Placenta</tissue>
    </source>
</reference>
<reference key="2">
    <citation type="journal article" date="2004" name="Genome Biol.">
        <title>A genome annotation-driven approach to cloning the human ORFeome.</title>
        <authorList>
            <person name="Collins J.E."/>
            <person name="Wright C.L."/>
            <person name="Edwards C.A."/>
            <person name="Davis M.P."/>
            <person name="Grinham J.A."/>
            <person name="Cole C.G."/>
            <person name="Goward M.E."/>
            <person name="Aguado B."/>
            <person name="Mallya M."/>
            <person name="Mokrab Y."/>
            <person name="Huckle E.J."/>
            <person name="Beare D.M."/>
            <person name="Dunham I."/>
        </authorList>
    </citation>
    <scope>NUCLEOTIDE SEQUENCE [LARGE SCALE MRNA]</scope>
    <scope>VARIANTS ILE-28 AND THR-349</scope>
</reference>
<reference key="3">
    <citation type="journal article" date="2004" name="Genome Res.">
        <title>The status, quality, and expansion of the NIH full-length cDNA project: the Mammalian Gene Collection (MGC).</title>
        <authorList>
            <consortium name="The MGC Project Team"/>
        </authorList>
    </citation>
    <scope>NUCLEOTIDE SEQUENCE [LARGE SCALE MRNA]</scope>
    <scope>VARIANTS ILE-28 AND THR-349</scope>
    <source>
        <tissue>Brain</tissue>
        <tissue>Placenta</tissue>
    </source>
</reference>
<organism>
    <name type="scientific">Homo sapiens</name>
    <name type="common">Human</name>
    <dbReference type="NCBI Taxonomy" id="9606"/>
    <lineage>
        <taxon>Eukaryota</taxon>
        <taxon>Metazoa</taxon>
        <taxon>Chordata</taxon>
        <taxon>Craniata</taxon>
        <taxon>Vertebrata</taxon>
        <taxon>Euteleostomi</taxon>
        <taxon>Mammalia</taxon>
        <taxon>Eutheria</taxon>
        <taxon>Euarchontoglires</taxon>
        <taxon>Primates</taxon>
        <taxon>Haplorrhini</taxon>
        <taxon>Catarrhini</taxon>
        <taxon>Hominidae</taxon>
        <taxon>Homo</taxon>
    </lineage>
</organism>
<accession>O43246</accession>
<accession>Q0P5U2</accession>
<accession>Q3KNQ6</accession>
<accession>Q4VC45</accession>
<accession>Q6IBY8</accession>
<accession>Q96H88</accession>
<gene>
    <name type="primary">SLC7A4</name>
</gene>
<sequence>MARGLPTIASLARLCQKLNRLKPLEDSTMETSLRRCLSTLDLTLLGVGGMVGSGLYVLTGAVAKEVAGPAVLLSFGVAAVASLLAALCYAEFGARVPRTGSAYLFTYVSMGELWAFLIGWNVLLEYIIGGAAVARAWSGYLDSMFSHSIRNFTETHVGSWQVPLLGHYPDFLAAGIILLASAFVSCGARVSSWLNHTFSAISLLVILFIVILGFILAQPHNWSADEGGFAPFGFSGVMAGTASCFYAFVGFDVIAASSEEAQNPRRSVPLAIAISLAIAAGAYILVSTVLTLMVPWHSLDPDSALADAFYQRGYRWAGFIVAAGSICAMNTVLLSLLFSLPRIVYAMAADGLFFQVFAHVHPRTQVPVAGTLAFGLLTAFLALLLDLESLVQFLSLGTLLAYTFVATSIIVLRFQKSSPPSSPGPASPGPLTKQQSSFSDHLQLVGTVHASVPEPGELKPALRPYLGFLDGYSPGAVVTWALGVMLASAITIGCVLVFGNSTLHLPHWGYILLLLLTSVMFLLSLLVLGAHQQQYREDLFQIPMVPLIPALSIVLNICLMLKLSYLTWVRFSIWLLMGLAVYFGYGIRHSKENQRELPGLNSTHYVVFPRGSLEETVQAMQPPSQAPAQDPGHME</sequence>
<dbReference type="EMBL" id="AJ000730">
    <property type="protein sequence ID" value="CAA04263.1"/>
    <property type="molecule type" value="mRNA"/>
</dbReference>
<dbReference type="EMBL" id="CR456580">
    <property type="protein sequence ID" value="CAG30466.1"/>
    <property type="molecule type" value="mRNA"/>
</dbReference>
<dbReference type="EMBL" id="BC008814">
    <property type="protein sequence ID" value="AAH08814.1"/>
    <property type="molecule type" value="mRNA"/>
</dbReference>
<dbReference type="EMBL" id="BC062565">
    <property type="protein sequence ID" value="AAH62565.1"/>
    <property type="molecule type" value="mRNA"/>
</dbReference>
<dbReference type="EMBL" id="BC107160">
    <property type="protein sequence ID" value="AAI07161.1"/>
    <property type="molecule type" value="mRNA"/>
</dbReference>
<dbReference type="EMBL" id="BC107161">
    <property type="protein sequence ID" value="AAI07162.1"/>
    <property type="molecule type" value="mRNA"/>
</dbReference>
<dbReference type="CCDS" id="CCDS33608.1"/>
<dbReference type="RefSeq" id="NP_004164.2">
    <property type="nucleotide sequence ID" value="NM_004173.3"/>
</dbReference>
<dbReference type="RefSeq" id="XP_047297428.1">
    <property type="nucleotide sequence ID" value="XM_047441472.1"/>
</dbReference>
<dbReference type="SMR" id="O43246"/>
<dbReference type="BioGRID" id="112435">
    <property type="interactions" value="1"/>
</dbReference>
<dbReference type="FunCoup" id="O43246">
    <property type="interactions" value="227"/>
</dbReference>
<dbReference type="IntAct" id="O43246">
    <property type="interactions" value="1"/>
</dbReference>
<dbReference type="STRING" id="9606.ENSP00000372390"/>
<dbReference type="DrugBank" id="DB00125">
    <property type="generic name" value="Arginine"/>
</dbReference>
<dbReference type="DrugBank" id="DB00123">
    <property type="generic name" value="Lysine"/>
</dbReference>
<dbReference type="TCDB" id="2.A.3.3.6">
    <property type="family name" value="the amino acid-polyamine-organocation (apc) family"/>
</dbReference>
<dbReference type="GlyCosmos" id="O43246">
    <property type="glycosylation" value="5 sites, No reported glycans"/>
</dbReference>
<dbReference type="GlyGen" id="O43246">
    <property type="glycosylation" value="5 sites"/>
</dbReference>
<dbReference type="iPTMnet" id="O43246"/>
<dbReference type="PhosphoSitePlus" id="O43246"/>
<dbReference type="BioMuta" id="SLC7A4"/>
<dbReference type="jPOST" id="O43246"/>
<dbReference type="MassIVE" id="O43246"/>
<dbReference type="PaxDb" id="9606-ENSP00000372390"/>
<dbReference type="PeptideAtlas" id="O43246"/>
<dbReference type="ProteomicsDB" id="48823"/>
<dbReference type="Antibodypedia" id="23447">
    <property type="antibodies" value="95 antibodies from 25 providers"/>
</dbReference>
<dbReference type="DNASU" id="6545"/>
<dbReference type="Ensembl" id="ENST00000382932.3">
    <property type="protein sequence ID" value="ENSP00000372390.2"/>
    <property type="gene ID" value="ENSG00000099960.13"/>
</dbReference>
<dbReference type="Ensembl" id="ENST00000403586.5">
    <property type="protein sequence ID" value="ENSP00000384278.1"/>
    <property type="gene ID" value="ENSG00000099960.13"/>
</dbReference>
<dbReference type="GeneID" id="6545"/>
<dbReference type="KEGG" id="hsa:6545"/>
<dbReference type="MANE-Select" id="ENST00000382932.3">
    <property type="protein sequence ID" value="ENSP00000372390.2"/>
    <property type="RefSeq nucleotide sequence ID" value="NM_004173.3"/>
    <property type="RefSeq protein sequence ID" value="NP_004164.2"/>
</dbReference>
<dbReference type="UCSC" id="uc002zud.3">
    <property type="organism name" value="human"/>
</dbReference>
<dbReference type="AGR" id="HGNC:11062"/>
<dbReference type="CTD" id="6545"/>
<dbReference type="DisGeNET" id="6545"/>
<dbReference type="GeneCards" id="SLC7A4"/>
<dbReference type="HGNC" id="HGNC:11062">
    <property type="gene designation" value="SLC7A4"/>
</dbReference>
<dbReference type="HPA" id="ENSG00000099960">
    <property type="expression patterns" value="Tissue enhanced (choroid plexus, testis)"/>
</dbReference>
<dbReference type="MIM" id="603752">
    <property type="type" value="gene"/>
</dbReference>
<dbReference type="neXtProt" id="NX_O43246"/>
<dbReference type="OpenTargets" id="ENSG00000099960"/>
<dbReference type="PharmGKB" id="PA35922"/>
<dbReference type="VEuPathDB" id="HostDB:ENSG00000099960"/>
<dbReference type="eggNOG" id="KOG1286">
    <property type="taxonomic scope" value="Eukaryota"/>
</dbReference>
<dbReference type="GeneTree" id="ENSGT00940000154637"/>
<dbReference type="HOGENOM" id="CLU_007946_15_7_1"/>
<dbReference type="InParanoid" id="O43246"/>
<dbReference type="OMA" id="LMFGWAP"/>
<dbReference type="OrthoDB" id="9446449at2759"/>
<dbReference type="PAN-GO" id="O43246">
    <property type="GO annotations" value="3 GO annotations based on evolutionary models"/>
</dbReference>
<dbReference type="PhylomeDB" id="O43246"/>
<dbReference type="TreeFam" id="TF315212"/>
<dbReference type="PathwayCommons" id="O43246"/>
<dbReference type="SignaLink" id="O43246"/>
<dbReference type="BioGRID-ORCS" id="6545">
    <property type="hits" value="24 hits in 1147 CRISPR screens"/>
</dbReference>
<dbReference type="GeneWiki" id="SLC7A4"/>
<dbReference type="GenomeRNAi" id="6545"/>
<dbReference type="Pharos" id="O43246">
    <property type="development level" value="Tbio"/>
</dbReference>
<dbReference type="PRO" id="PR:O43246"/>
<dbReference type="Proteomes" id="UP000005640">
    <property type="component" value="Chromosome 22"/>
</dbReference>
<dbReference type="RNAct" id="O43246">
    <property type="molecule type" value="protein"/>
</dbReference>
<dbReference type="Bgee" id="ENSG00000099960">
    <property type="expression patterns" value="Expressed in lower esophagus mucosa and 92 other cell types or tissues"/>
</dbReference>
<dbReference type="ExpressionAtlas" id="O43246">
    <property type="expression patterns" value="baseline and differential"/>
</dbReference>
<dbReference type="GO" id="GO:0016020">
    <property type="term" value="C:membrane"/>
    <property type="evidence" value="ECO:0000304"/>
    <property type="project" value="ProtInc"/>
</dbReference>
<dbReference type="GO" id="GO:0005886">
    <property type="term" value="C:plasma membrane"/>
    <property type="evidence" value="ECO:0000318"/>
    <property type="project" value="GO_Central"/>
</dbReference>
<dbReference type="GO" id="GO:0015171">
    <property type="term" value="F:amino acid transmembrane transporter activity"/>
    <property type="evidence" value="ECO:0000318"/>
    <property type="project" value="GO_Central"/>
</dbReference>
<dbReference type="GO" id="GO:0015174">
    <property type="term" value="F:basic amino acid transmembrane transporter activity"/>
    <property type="evidence" value="ECO:0000304"/>
    <property type="project" value="ProtInc"/>
</dbReference>
<dbReference type="GO" id="GO:0006865">
    <property type="term" value="P:amino acid transport"/>
    <property type="evidence" value="ECO:0000318"/>
    <property type="project" value="GO_Central"/>
</dbReference>
<dbReference type="FunFam" id="1.20.1740.10:FF:000010">
    <property type="entry name" value="probable cationic amino acid transporter"/>
    <property type="match status" value="1"/>
</dbReference>
<dbReference type="Gene3D" id="1.20.1740.10">
    <property type="entry name" value="Amino acid/polyamine transporter I"/>
    <property type="match status" value="2"/>
</dbReference>
<dbReference type="InterPro" id="IPR002293">
    <property type="entry name" value="AA/rel_permease1"/>
</dbReference>
<dbReference type="InterPro" id="IPR029485">
    <property type="entry name" value="CAT_C"/>
</dbReference>
<dbReference type="PANTHER" id="PTHR43243:SF4">
    <property type="entry name" value="CATIONIC AMINO ACID TRANSPORTER 4"/>
    <property type="match status" value="1"/>
</dbReference>
<dbReference type="PANTHER" id="PTHR43243">
    <property type="entry name" value="INNER MEMBRANE TRANSPORTER YGJI-RELATED"/>
    <property type="match status" value="1"/>
</dbReference>
<dbReference type="Pfam" id="PF13520">
    <property type="entry name" value="AA_permease_2"/>
    <property type="match status" value="1"/>
</dbReference>
<dbReference type="Pfam" id="PF13906">
    <property type="entry name" value="AA_permease_C"/>
    <property type="match status" value="1"/>
</dbReference>
<dbReference type="PIRSF" id="PIRSF006060">
    <property type="entry name" value="AA_transporter"/>
    <property type="match status" value="1"/>
</dbReference>
<proteinExistence type="evidence at protein level"/>
<feature type="chain" id="PRO_0000054269" description="Cationic amino acid transporter 4">
    <location>
        <begin position="1"/>
        <end position="635"/>
    </location>
</feature>
<feature type="transmembrane region" description="Helical" evidence="2">
    <location>
        <begin position="42"/>
        <end position="62"/>
    </location>
</feature>
<feature type="transmembrane region" description="Helical" evidence="2">
    <location>
        <begin position="66"/>
        <end position="86"/>
    </location>
</feature>
<feature type="transmembrane region" description="Helical" evidence="2">
    <location>
        <begin position="113"/>
        <end position="133"/>
    </location>
</feature>
<feature type="transmembrane region" description="Helical" evidence="2">
    <location>
        <begin position="197"/>
        <end position="217"/>
    </location>
</feature>
<feature type="transmembrane region" description="Helical" evidence="2">
    <location>
        <begin position="229"/>
        <end position="249"/>
    </location>
</feature>
<feature type="transmembrane region" description="Helical" evidence="2">
    <location>
        <begin position="270"/>
        <end position="290"/>
    </location>
</feature>
<feature type="transmembrane region" description="Helical" evidence="2">
    <location>
        <begin position="318"/>
        <end position="338"/>
    </location>
</feature>
<feature type="transmembrane region" description="Helical" evidence="2">
    <location>
        <begin position="365"/>
        <end position="385"/>
    </location>
</feature>
<feature type="transmembrane region" description="Helical" evidence="2">
    <location>
        <begin position="391"/>
        <end position="411"/>
    </location>
</feature>
<feature type="transmembrane region" description="Helical" evidence="2">
    <location>
        <begin position="478"/>
        <end position="498"/>
    </location>
</feature>
<feature type="transmembrane region" description="Helical" evidence="2">
    <location>
        <begin position="508"/>
        <end position="528"/>
    </location>
</feature>
<feature type="transmembrane region" description="Helical" evidence="2">
    <location>
        <begin position="539"/>
        <end position="559"/>
    </location>
</feature>
<feature type="transmembrane region" description="Helical" evidence="2">
    <location>
        <begin position="567"/>
        <end position="587"/>
    </location>
</feature>
<feature type="modified residue" description="Phosphoserine" evidence="1">
    <location>
        <position position="422"/>
    </location>
</feature>
<feature type="modified residue" description="Phosphoserine" evidence="1">
    <location>
        <position position="427"/>
    </location>
</feature>
<feature type="glycosylation site" description="N-linked (GlcNAc...) asparagine" evidence="2">
    <location>
        <position position="151"/>
    </location>
</feature>
<feature type="glycosylation site" description="N-linked (GlcNAc...) asparagine" evidence="2">
    <location>
        <position position="195"/>
    </location>
</feature>
<feature type="glycosylation site" description="N-linked (GlcNAc...) asparagine" evidence="2">
    <location>
        <position position="221"/>
    </location>
</feature>
<feature type="glycosylation site" description="N-linked (GlcNAc...) asparagine" evidence="2">
    <location>
        <position position="500"/>
    </location>
</feature>
<feature type="glycosylation site" description="N-linked (GlcNAc...) asparagine" evidence="2">
    <location>
        <position position="601"/>
    </location>
</feature>
<feature type="sequence variant" id="VAR_048155" description="In dbSNP:rs2072550." evidence="3 4">
    <original>T</original>
    <variation>I</variation>
    <location>
        <position position="28"/>
    </location>
</feature>
<feature type="sequence variant" id="VAR_048156" description="In dbSNP:rs2270384." evidence="3 4">
    <original>A</original>
    <variation>T</variation>
    <location>
        <position position="349"/>
    </location>
</feature>
<feature type="sequence variant" id="VAR_060989" description="In dbSNP:rs55700350.">
    <original>F</original>
    <variation>Y</variation>
    <location>
        <position position="608"/>
    </location>
</feature>
<feature type="sequence conflict" description="In Ref. 1; CAA04263." evidence="5" ref="1">
    <original>THVGSWQVPLLGHYPDFLAAGIILLASAFVSCGARVSS</original>
    <variation>DPRGFLAGAPPGPLPGLPGCWHHPPWPLPLSPVEPACPP</variation>
    <location>
        <begin position="155"/>
        <end position="192"/>
    </location>
</feature>
<protein>
    <recommendedName>
        <fullName>Cationic amino acid transporter 4</fullName>
        <shortName>CAT-4</shortName>
        <shortName>CAT4</shortName>
    </recommendedName>
    <alternativeName>
        <fullName>Solute carrier family 7 member 4</fullName>
    </alternativeName>
</protein>
<name>CTR4_HUMAN</name>